<protein>
    <recommendedName>
        <fullName evidence="1">Putative competence-damage inducible protein</fullName>
    </recommendedName>
</protein>
<sequence length="409" mass="44797">MKAEILCVGTELLLGDIVNTNAQYISKELANMGIEVYHHSVIGDNEDRLLKELERAFNYCDLVITTGGLGPTKDDLTKESVAKFFQEDLILHEKSLKQIEKRLSCFNKSMTESNKKQAYFPKNCEILENPNGTAPGFIIEKDNKIAVILPGPPYEMQPMFENKVIPYLEKLTNSTIKSKVLRITGIGESDVADLISDILENQTNPTVAPYAKQGETTLRITAKANSEEKALSLIVPIEKKIRQILGTNIYGSGETSLEEVVANMLVKRNLTIATAESCTGGLLAGKLISFPGISSVFLEGAITYSNESKINRLNVKKETLEKYTAVSKEVALEMAEGIAKSAGTNIGISTTGVAGPSGGTYDKPIGLIYIGLYINGKTSVKELNYSGSRQFIRNITVTRALDFLRKNLI</sequence>
<proteinExistence type="inferred from homology"/>
<accession>B1KSY5</accession>
<dbReference type="EMBL" id="CP000962">
    <property type="protein sequence ID" value="ACA53864.1"/>
    <property type="molecule type" value="Genomic_DNA"/>
</dbReference>
<dbReference type="RefSeq" id="WP_012342042.1">
    <property type="nucleotide sequence ID" value="NC_010520.1"/>
</dbReference>
<dbReference type="SMR" id="B1KSY5"/>
<dbReference type="KEGG" id="cbl:CLK_3393"/>
<dbReference type="HOGENOM" id="CLU_030805_9_3_9"/>
<dbReference type="CDD" id="cd00885">
    <property type="entry name" value="cinA"/>
    <property type="match status" value="1"/>
</dbReference>
<dbReference type="Gene3D" id="3.30.70.2860">
    <property type="match status" value="1"/>
</dbReference>
<dbReference type="Gene3D" id="3.90.950.20">
    <property type="entry name" value="CinA-like"/>
    <property type="match status" value="1"/>
</dbReference>
<dbReference type="Gene3D" id="3.40.980.10">
    <property type="entry name" value="MoaB/Mog-like domain"/>
    <property type="match status" value="1"/>
</dbReference>
<dbReference type="HAMAP" id="MF_00226_B">
    <property type="entry name" value="CinA_B"/>
    <property type="match status" value="1"/>
</dbReference>
<dbReference type="InterPro" id="IPR050101">
    <property type="entry name" value="CinA"/>
</dbReference>
<dbReference type="InterPro" id="IPR036653">
    <property type="entry name" value="CinA-like_C"/>
</dbReference>
<dbReference type="InterPro" id="IPR008136">
    <property type="entry name" value="CinA_C"/>
</dbReference>
<dbReference type="InterPro" id="IPR041424">
    <property type="entry name" value="CinA_KH"/>
</dbReference>
<dbReference type="InterPro" id="IPR008135">
    <property type="entry name" value="Competence-induced_CinA"/>
</dbReference>
<dbReference type="InterPro" id="IPR036425">
    <property type="entry name" value="MoaB/Mog-like_dom_sf"/>
</dbReference>
<dbReference type="InterPro" id="IPR001453">
    <property type="entry name" value="MoaB/Mog_dom"/>
</dbReference>
<dbReference type="NCBIfam" id="TIGR00200">
    <property type="entry name" value="cinA_nterm"/>
    <property type="match status" value="1"/>
</dbReference>
<dbReference type="NCBIfam" id="TIGR00177">
    <property type="entry name" value="molyb_syn"/>
    <property type="match status" value="1"/>
</dbReference>
<dbReference type="NCBIfam" id="TIGR00199">
    <property type="entry name" value="PncC_domain"/>
    <property type="match status" value="1"/>
</dbReference>
<dbReference type="NCBIfam" id="NF001813">
    <property type="entry name" value="PRK00549.1"/>
    <property type="match status" value="1"/>
</dbReference>
<dbReference type="PANTHER" id="PTHR13939">
    <property type="entry name" value="NICOTINAMIDE-NUCLEOTIDE AMIDOHYDROLASE PNCC"/>
    <property type="match status" value="1"/>
</dbReference>
<dbReference type="PANTHER" id="PTHR13939:SF0">
    <property type="entry name" value="NMN AMIDOHYDROLASE-LIKE PROTEIN YFAY"/>
    <property type="match status" value="1"/>
</dbReference>
<dbReference type="Pfam" id="PF02464">
    <property type="entry name" value="CinA"/>
    <property type="match status" value="1"/>
</dbReference>
<dbReference type="Pfam" id="PF18146">
    <property type="entry name" value="CinA_KH"/>
    <property type="match status" value="1"/>
</dbReference>
<dbReference type="Pfam" id="PF00994">
    <property type="entry name" value="MoCF_biosynth"/>
    <property type="match status" value="1"/>
</dbReference>
<dbReference type="PIRSF" id="PIRSF006728">
    <property type="entry name" value="CinA"/>
    <property type="match status" value="1"/>
</dbReference>
<dbReference type="SMART" id="SM00852">
    <property type="entry name" value="MoCF_biosynth"/>
    <property type="match status" value="1"/>
</dbReference>
<dbReference type="SUPFAM" id="SSF142433">
    <property type="entry name" value="CinA-like"/>
    <property type="match status" value="1"/>
</dbReference>
<dbReference type="SUPFAM" id="SSF53218">
    <property type="entry name" value="Molybdenum cofactor biosynthesis proteins"/>
    <property type="match status" value="1"/>
</dbReference>
<organism>
    <name type="scientific">Clostridium botulinum (strain Loch Maree / Type A3)</name>
    <dbReference type="NCBI Taxonomy" id="498214"/>
    <lineage>
        <taxon>Bacteria</taxon>
        <taxon>Bacillati</taxon>
        <taxon>Bacillota</taxon>
        <taxon>Clostridia</taxon>
        <taxon>Eubacteriales</taxon>
        <taxon>Clostridiaceae</taxon>
        <taxon>Clostridium</taxon>
    </lineage>
</organism>
<feature type="chain" id="PRO_1000100312" description="Putative competence-damage inducible protein">
    <location>
        <begin position="1"/>
        <end position="409"/>
    </location>
</feature>
<comment type="similarity">
    <text evidence="1">Belongs to the CinA family.</text>
</comment>
<name>CINA_CLOBM</name>
<gene>
    <name evidence="1" type="primary">cinA</name>
    <name type="ordered locus">CLK_3393</name>
</gene>
<reference key="1">
    <citation type="journal article" date="2007" name="PLoS ONE">
        <title>Analysis of the neurotoxin complex genes in Clostridium botulinum A1-A4 and B1 strains: BoNT/A3, /Ba4 and /B1 clusters are located within plasmids.</title>
        <authorList>
            <person name="Smith T.J."/>
            <person name="Hill K.K."/>
            <person name="Foley B.T."/>
            <person name="Detter J.C."/>
            <person name="Munk A.C."/>
            <person name="Bruce D.C."/>
            <person name="Doggett N.A."/>
            <person name="Smith L.A."/>
            <person name="Marks J.D."/>
            <person name="Xie G."/>
            <person name="Brettin T.S."/>
        </authorList>
    </citation>
    <scope>NUCLEOTIDE SEQUENCE [LARGE SCALE GENOMIC DNA]</scope>
    <source>
        <strain>Loch Maree / Type A3</strain>
    </source>
</reference>
<evidence type="ECO:0000255" key="1">
    <source>
        <dbReference type="HAMAP-Rule" id="MF_00226"/>
    </source>
</evidence>